<evidence type="ECO:0000255" key="1">
    <source>
        <dbReference type="HAMAP-Rule" id="MF_00036"/>
    </source>
</evidence>
<comment type="function">
    <text evidence="1">Catalyzes the attachment of alanine to tRNA(Ala) in a two-step reaction: alanine is first activated by ATP to form Ala-AMP and then transferred to the acceptor end of tRNA(Ala). Also edits incorrectly charged Ser-tRNA(Ala) and Gly-tRNA(Ala) via its editing domain.</text>
</comment>
<comment type="catalytic activity">
    <reaction evidence="1">
        <text>tRNA(Ala) + L-alanine + ATP = L-alanyl-tRNA(Ala) + AMP + diphosphate</text>
        <dbReference type="Rhea" id="RHEA:12540"/>
        <dbReference type="Rhea" id="RHEA-COMP:9657"/>
        <dbReference type="Rhea" id="RHEA-COMP:9923"/>
        <dbReference type="ChEBI" id="CHEBI:30616"/>
        <dbReference type="ChEBI" id="CHEBI:33019"/>
        <dbReference type="ChEBI" id="CHEBI:57972"/>
        <dbReference type="ChEBI" id="CHEBI:78442"/>
        <dbReference type="ChEBI" id="CHEBI:78497"/>
        <dbReference type="ChEBI" id="CHEBI:456215"/>
        <dbReference type="EC" id="6.1.1.7"/>
    </reaction>
</comment>
<comment type="cofactor">
    <cofactor evidence="1">
        <name>Zn(2+)</name>
        <dbReference type="ChEBI" id="CHEBI:29105"/>
    </cofactor>
    <text evidence="1">Binds 1 zinc ion per subunit.</text>
</comment>
<comment type="subcellular location">
    <subcellularLocation>
        <location evidence="1">Cytoplasm</location>
    </subcellularLocation>
</comment>
<comment type="domain">
    <text evidence="1">Consists of three domains; the N-terminal catalytic domain, the editing domain and the C-terminal C-Ala domain. The editing domain removes incorrectly charged amino acids, while the C-Ala domain, along with tRNA(Ala), serves as a bridge to cooperatively bring together the editing and aminoacylation centers thus stimulating deacylation of misacylated tRNAs.</text>
</comment>
<comment type="similarity">
    <text evidence="1">Belongs to the class-II aminoacyl-tRNA synthetase family.</text>
</comment>
<proteinExistence type="inferred from homology"/>
<keyword id="KW-0030">Aminoacyl-tRNA synthetase</keyword>
<keyword id="KW-0067">ATP-binding</keyword>
<keyword id="KW-0963">Cytoplasm</keyword>
<keyword id="KW-0436">Ligase</keyword>
<keyword id="KW-0479">Metal-binding</keyword>
<keyword id="KW-0547">Nucleotide-binding</keyword>
<keyword id="KW-0648">Protein biosynthesis</keyword>
<keyword id="KW-0694">RNA-binding</keyword>
<keyword id="KW-0820">tRNA-binding</keyword>
<keyword id="KW-0862">Zinc</keyword>
<dbReference type="EC" id="6.1.1.7" evidence="1"/>
<dbReference type="EMBL" id="CP000789">
    <property type="protein sequence ID" value="ABU72447.1"/>
    <property type="molecule type" value="Genomic_DNA"/>
</dbReference>
<dbReference type="RefSeq" id="WP_012128902.1">
    <property type="nucleotide sequence ID" value="NC_009783.1"/>
</dbReference>
<dbReference type="SMR" id="A7MYT5"/>
<dbReference type="KEGG" id="vha:VIBHAR_03511"/>
<dbReference type="PATRIC" id="fig|338187.25.peg.2699"/>
<dbReference type="Proteomes" id="UP000008152">
    <property type="component" value="Chromosome I"/>
</dbReference>
<dbReference type="GO" id="GO:0005829">
    <property type="term" value="C:cytosol"/>
    <property type="evidence" value="ECO:0007669"/>
    <property type="project" value="TreeGrafter"/>
</dbReference>
<dbReference type="GO" id="GO:0004813">
    <property type="term" value="F:alanine-tRNA ligase activity"/>
    <property type="evidence" value="ECO:0007669"/>
    <property type="project" value="UniProtKB-UniRule"/>
</dbReference>
<dbReference type="GO" id="GO:0002161">
    <property type="term" value="F:aminoacyl-tRNA deacylase activity"/>
    <property type="evidence" value="ECO:0007669"/>
    <property type="project" value="TreeGrafter"/>
</dbReference>
<dbReference type="GO" id="GO:0005524">
    <property type="term" value="F:ATP binding"/>
    <property type="evidence" value="ECO:0007669"/>
    <property type="project" value="UniProtKB-UniRule"/>
</dbReference>
<dbReference type="GO" id="GO:0000049">
    <property type="term" value="F:tRNA binding"/>
    <property type="evidence" value="ECO:0007669"/>
    <property type="project" value="UniProtKB-KW"/>
</dbReference>
<dbReference type="GO" id="GO:0008270">
    <property type="term" value="F:zinc ion binding"/>
    <property type="evidence" value="ECO:0007669"/>
    <property type="project" value="UniProtKB-UniRule"/>
</dbReference>
<dbReference type="GO" id="GO:0006419">
    <property type="term" value="P:alanyl-tRNA aminoacylation"/>
    <property type="evidence" value="ECO:0007669"/>
    <property type="project" value="UniProtKB-UniRule"/>
</dbReference>
<dbReference type="GO" id="GO:0045892">
    <property type="term" value="P:negative regulation of DNA-templated transcription"/>
    <property type="evidence" value="ECO:0007669"/>
    <property type="project" value="TreeGrafter"/>
</dbReference>
<dbReference type="CDD" id="cd00673">
    <property type="entry name" value="AlaRS_core"/>
    <property type="match status" value="1"/>
</dbReference>
<dbReference type="FunFam" id="2.40.30.130:FF:000001">
    <property type="entry name" value="Alanine--tRNA ligase"/>
    <property type="match status" value="1"/>
</dbReference>
<dbReference type="FunFam" id="3.10.310.40:FF:000001">
    <property type="entry name" value="Alanine--tRNA ligase"/>
    <property type="match status" value="1"/>
</dbReference>
<dbReference type="FunFam" id="3.30.54.20:FF:000001">
    <property type="entry name" value="Alanine--tRNA ligase"/>
    <property type="match status" value="1"/>
</dbReference>
<dbReference type="FunFam" id="3.30.930.10:FF:000004">
    <property type="entry name" value="Alanine--tRNA ligase"/>
    <property type="match status" value="1"/>
</dbReference>
<dbReference type="FunFam" id="3.30.980.10:FF:000004">
    <property type="entry name" value="Alanine--tRNA ligase, cytoplasmic"/>
    <property type="match status" value="1"/>
</dbReference>
<dbReference type="Gene3D" id="2.40.30.130">
    <property type="match status" value="1"/>
</dbReference>
<dbReference type="Gene3D" id="3.10.310.40">
    <property type="match status" value="1"/>
</dbReference>
<dbReference type="Gene3D" id="3.30.54.20">
    <property type="match status" value="1"/>
</dbReference>
<dbReference type="Gene3D" id="3.30.930.10">
    <property type="entry name" value="Bira Bifunctional Protein, Domain 2"/>
    <property type="match status" value="1"/>
</dbReference>
<dbReference type="Gene3D" id="3.30.980.10">
    <property type="entry name" value="Threonyl-trna Synthetase, Chain A, domain 2"/>
    <property type="match status" value="1"/>
</dbReference>
<dbReference type="HAMAP" id="MF_00036_B">
    <property type="entry name" value="Ala_tRNA_synth_B"/>
    <property type="match status" value="1"/>
</dbReference>
<dbReference type="InterPro" id="IPR045864">
    <property type="entry name" value="aa-tRNA-synth_II/BPL/LPL"/>
</dbReference>
<dbReference type="InterPro" id="IPR002318">
    <property type="entry name" value="Ala-tRNA-lgiase_IIc"/>
</dbReference>
<dbReference type="InterPro" id="IPR018162">
    <property type="entry name" value="Ala-tRNA-ligase_IIc_anticod-bd"/>
</dbReference>
<dbReference type="InterPro" id="IPR018165">
    <property type="entry name" value="Ala-tRNA-synth_IIc_core"/>
</dbReference>
<dbReference type="InterPro" id="IPR018164">
    <property type="entry name" value="Ala-tRNA-synth_IIc_N"/>
</dbReference>
<dbReference type="InterPro" id="IPR050058">
    <property type="entry name" value="Ala-tRNA_ligase"/>
</dbReference>
<dbReference type="InterPro" id="IPR023033">
    <property type="entry name" value="Ala_tRNA_ligase_euk/bac"/>
</dbReference>
<dbReference type="InterPro" id="IPR003156">
    <property type="entry name" value="DHHA1_dom"/>
</dbReference>
<dbReference type="InterPro" id="IPR018163">
    <property type="entry name" value="Thr/Ala-tRNA-synth_IIc_edit"/>
</dbReference>
<dbReference type="InterPro" id="IPR009000">
    <property type="entry name" value="Transl_B-barrel_sf"/>
</dbReference>
<dbReference type="InterPro" id="IPR012947">
    <property type="entry name" value="tRNA_SAD"/>
</dbReference>
<dbReference type="NCBIfam" id="TIGR00344">
    <property type="entry name" value="alaS"/>
    <property type="match status" value="1"/>
</dbReference>
<dbReference type="PANTHER" id="PTHR11777:SF9">
    <property type="entry name" value="ALANINE--TRNA LIGASE, CYTOPLASMIC"/>
    <property type="match status" value="1"/>
</dbReference>
<dbReference type="PANTHER" id="PTHR11777">
    <property type="entry name" value="ALANYL-TRNA SYNTHETASE"/>
    <property type="match status" value="1"/>
</dbReference>
<dbReference type="Pfam" id="PF02272">
    <property type="entry name" value="DHHA1"/>
    <property type="match status" value="1"/>
</dbReference>
<dbReference type="Pfam" id="PF01411">
    <property type="entry name" value="tRNA-synt_2c"/>
    <property type="match status" value="1"/>
</dbReference>
<dbReference type="Pfam" id="PF07973">
    <property type="entry name" value="tRNA_SAD"/>
    <property type="match status" value="1"/>
</dbReference>
<dbReference type="PRINTS" id="PR00980">
    <property type="entry name" value="TRNASYNTHALA"/>
</dbReference>
<dbReference type="SMART" id="SM00863">
    <property type="entry name" value="tRNA_SAD"/>
    <property type="match status" value="1"/>
</dbReference>
<dbReference type="SUPFAM" id="SSF55681">
    <property type="entry name" value="Class II aaRS and biotin synthetases"/>
    <property type="match status" value="1"/>
</dbReference>
<dbReference type="SUPFAM" id="SSF101353">
    <property type="entry name" value="Putative anticodon-binding domain of alanyl-tRNA synthetase (AlaRS)"/>
    <property type="match status" value="1"/>
</dbReference>
<dbReference type="SUPFAM" id="SSF55186">
    <property type="entry name" value="ThrRS/AlaRS common domain"/>
    <property type="match status" value="1"/>
</dbReference>
<dbReference type="SUPFAM" id="SSF50447">
    <property type="entry name" value="Translation proteins"/>
    <property type="match status" value="1"/>
</dbReference>
<dbReference type="PROSITE" id="PS50860">
    <property type="entry name" value="AA_TRNA_LIGASE_II_ALA"/>
    <property type="match status" value="1"/>
</dbReference>
<reference key="1">
    <citation type="submission" date="2007-08" db="EMBL/GenBank/DDBJ databases">
        <authorList>
            <consortium name="The Vibrio harveyi Genome Sequencing Project"/>
            <person name="Bassler B."/>
            <person name="Clifton S.W."/>
            <person name="Fulton L."/>
            <person name="Delehaunty K."/>
            <person name="Fronick C."/>
            <person name="Harrison M."/>
            <person name="Markivic C."/>
            <person name="Fulton R."/>
            <person name="Tin-Wollam A.-M."/>
            <person name="Shah N."/>
            <person name="Pepin K."/>
            <person name="Nash W."/>
            <person name="Thiruvilangam P."/>
            <person name="Bhonagiri V."/>
            <person name="Waters C."/>
            <person name="Tu K.C."/>
            <person name="Irgon J."/>
            <person name="Wilson R.K."/>
        </authorList>
    </citation>
    <scope>NUCLEOTIDE SEQUENCE [LARGE SCALE GENOMIC DNA]</scope>
    <source>
        <strain>ATCC BAA-1116 / BB120</strain>
    </source>
</reference>
<protein>
    <recommendedName>
        <fullName evidence="1">Alanine--tRNA ligase</fullName>
        <ecNumber evidence="1">6.1.1.7</ecNumber>
    </recommendedName>
    <alternativeName>
        <fullName evidence="1">Alanyl-tRNA synthetase</fullName>
        <shortName evidence="1">AlaRS</shortName>
    </alternativeName>
</protein>
<name>SYA_VIBC1</name>
<accession>A7MYT5</accession>
<organism>
    <name type="scientific">Vibrio campbellii (strain ATCC BAA-1116)</name>
    <dbReference type="NCBI Taxonomy" id="2902295"/>
    <lineage>
        <taxon>Bacteria</taxon>
        <taxon>Pseudomonadati</taxon>
        <taxon>Pseudomonadota</taxon>
        <taxon>Gammaproteobacteria</taxon>
        <taxon>Vibrionales</taxon>
        <taxon>Vibrionaceae</taxon>
        <taxon>Vibrio</taxon>
    </lineage>
</organism>
<gene>
    <name evidence="1" type="primary">alaS</name>
    <name type="ordered locus">VIBHAR_03511</name>
</gene>
<feature type="chain" id="PRO_0000347861" description="Alanine--tRNA ligase">
    <location>
        <begin position="1"/>
        <end position="865"/>
    </location>
</feature>
<feature type="binding site" evidence="1">
    <location>
        <position position="568"/>
    </location>
    <ligand>
        <name>Zn(2+)</name>
        <dbReference type="ChEBI" id="CHEBI:29105"/>
    </ligand>
</feature>
<feature type="binding site" evidence="1">
    <location>
        <position position="572"/>
    </location>
    <ligand>
        <name>Zn(2+)</name>
        <dbReference type="ChEBI" id="CHEBI:29105"/>
    </ligand>
</feature>
<feature type="binding site" evidence="1">
    <location>
        <position position="670"/>
    </location>
    <ligand>
        <name>Zn(2+)</name>
        <dbReference type="ChEBI" id="CHEBI:29105"/>
    </ligand>
</feature>
<feature type="binding site" evidence="1">
    <location>
        <position position="674"/>
    </location>
    <ligand>
        <name>Zn(2+)</name>
        <dbReference type="ChEBI" id="CHEBI:29105"/>
    </ligand>
</feature>
<sequence length="865" mass="94342">MYMSTDEVRNAFLKFFESKGHQIVESSSLVPHNDPTLLFTNAGMNQFKDCFLGLEKRAYTRATTAQRCVRAGGKHNDLENVGFTARHHTFFEMLGNFSFGDYFKEDAIAFAWEFLTETLKLPADRLLVTVYETDDEAFDIWNKKVGVPADRIIRIGDKKGGKPFESDNFWQMGDTGPCGPCTEIFYDHGEHIWGGRPGTPEEDGDRFIEIWNNVFMQFNRQADGTMEPLPKPSVDTGMGIERISAIMQGVHSNYEIDVFQALIKAAAEVIGYEDLSNQSLRVIADHIRSCSFLIVDGVMPSNEGRGYVLRRIIRRAVRHGNKLGAQGAFFHKLVGVLAEIMGTAGEELKRQQAVVEKVLRIEEENFGRTLERGMAILNEALDNISSQGTDGKVLDGETVFKLYDTYGFPADLTNDVAREREFAIDEEGFEKAMEEQRQRAREAGNFGTDYNAAIKVDTQTEFCGYTGTKGSSSVAAMFVEGNEVESLSAGDKAIIVLGETPFYAESGGQCGDAGEIRTESGVFRVEDTQKLGNAIAHHGVMAEGVLAKGDEVATIVDAERRAAISLNHSATHLLHAALRQLLGEHVTQKGSLVKADGLRFDFSHLEAVTAAELKEVERLVNAQIRRNHVIETNVMDIESAKKKGAMALFGEKYDDEVRVLSMGDFSTELCGGIHASSTGDIGLFKITSEGGIAAGIRRIEAVTGEGALDAIEAQAAKYEEKLAESAQKAKSLEKEIQKLKDKMAAAESANIMGKVQDINGTKVLIAALEGADNKNLRTMVDDIKNQVGSGVILLANVNDDKIGLIAGVTKDLIGKVKAGDLVKMVAEQVGGKGGGRPDMAQAGGTDVAALPAAIQTVQPWLEERL</sequence>